<proteinExistence type="evidence at protein level"/>
<dbReference type="EC" id="3.4.23.-" evidence="1"/>
<dbReference type="EMBL" id="BX284605">
    <property type="protein sequence ID" value="CAA99777.1"/>
    <property type="molecule type" value="Genomic_DNA"/>
</dbReference>
<dbReference type="EMBL" id="BX284605">
    <property type="protein sequence ID" value="CBW44360.1"/>
    <property type="molecule type" value="Genomic_DNA"/>
</dbReference>
<dbReference type="PIR" id="T19309">
    <property type="entry name" value="T19309"/>
</dbReference>
<dbReference type="RefSeq" id="NP_001256448.1">
    <molecule id="Q18020-1"/>
    <property type="nucleotide sequence ID" value="NM_001269519.3"/>
</dbReference>
<dbReference type="RefSeq" id="NP_001256449.1">
    <molecule id="Q18020-2"/>
    <property type="nucleotide sequence ID" value="NM_001269520.3"/>
</dbReference>
<dbReference type="SMR" id="Q18020"/>
<dbReference type="FunCoup" id="Q18020">
    <property type="interactions" value="21"/>
</dbReference>
<dbReference type="IntAct" id="Q18020">
    <property type="interactions" value="1"/>
</dbReference>
<dbReference type="STRING" id="6239.C15C8.3a.1"/>
<dbReference type="MEROPS" id="A01.A76"/>
<dbReference type="GlyCosmos" id="Q18020">
    <property type="glycosylation" value="2 sites, No reported glycans"/>
</dbReference>
<dbReference type="PaxDb" id="6239-C15C8.3a"/>
<dbReference type="PeptideAtlas" id="Q18020"/>
<dbReference type="EnsemblMetazoa" id="C15C8.3a.1">
    <molecule id="Q18020-1"/>
    <property type="protein sequence ID" value="C15C8.3a.1"/>
    <property type="gene ID" value="WBGene00007605"/>
</dbReference>
<dbReference type="EnsemblMetazoa" id="C15C8.3b.1">
    <molecule id="Q18020-2"/>
    <property type="protein sequence ID" value="C15C8.3b.1"/>
    <property type="gene ID" value="WBGene00007605"/>
</dbReference>
<dbReference type="GeneID" id="182635"/>
<dbReference type="KEGG" id="cel:CELE_C15C8.3"/>
<dbReference type="UCSC" id="C15C8.3">
    <molecule id="Q18020-1"/>
    <property type="organism name" value="c. elegans"/>
</dbReference>
<dbReference type="AGR" id="WB:WBGene00007605"/>
<dbReference type="CTD" id="182635"/>
<dbReference type="WormBase" id="C15C8.3a">
    <molecule id="Q18020-1"/>
    <property type="protein sequence ID" value="CE05287"/>
    <property type="gene ID" value="WBGene00007605"/>
    <property type="gene designation" value="hrg-7"/>
</dbReference>
<dbReference type="WormBase" id="C15C8.3b">
    <molecule id="Q18020-2"/>
    <property type="protein sequence ID" value="CE45278"/>
    <property type="gene ID" value="WBGene00007605"/>
    <property type="gene designation" value="hrg-7"/>
</dbReference>
<dbReference type="eggNOG" id="KOG1339">
    <property type="taxonomic scope" value="Eukaryota"/>
</dbReference>
<dbReference type="HOGENOM" id="CLU_013253_3_4_1"/>
<dbReference type="InParanoid" id="Q18020"/>
<dbReference type="OMA" id="FYPAWML"/>
<dbReference type="OrthoDB" id="5839471at2759"/>
<dbReference type="PhylomeDB" id="Q18020"/>
<dbReference type="Reactome" id="R-CEL-2022377">
    <property type="pathway name" value="Metabolism of Angiotensinogen to Angiotensins"/>
</dbReference>
<dbReference type="PRO" id="PR:Q18020"/>
<dbReference type="Proteomes" id="UP000001940">
    <property type="component" value="Chromosome V"/>
</dbReference>
<dbReference type="Bgee" id="WBGene00007605">
    <property type="expression patterns" value="Expressed in larva and 3 other cell types or tissues"/>
</dbReference>
<dbReference type="GO" id="GO:0005576">
    <property type="term" value="C:extracellular region"/>
    <property type="evidence" value="ECO:0007669"/>
    <property type="project" value="UniProtKB-SubCell"/>
</dbReference>
<dbReference type="GO" id="GO:0005764">
    <property type="term" value="C:lysosome"/>
    <property type="evidence" value="ECO:0000318"/>
    <property type="project" value="GO_Central"/>
</dbReference>
<dbReference type="GO" id="GO:0004190">
    <property type="term" value="F:aspartic-type endopeptidase activity"/>
    <property type="evidence" value="ECO:0000318"/>
    <property type="project" value="GO_Central"/>
</dbReference>
<dbReference type="GO" id="GO:0006915">
    <property type="term" value="P:apoptotic process"/>
    <property type="evidence" value="ECO:0000318"/>
    <property type="project" value="GO_Central"/>
</dbReference>
<dbReference type="GO" id="GO:0006508">
    <property type="term" value="P:proteolysis"/>
    <property type="evidence" value="ECO:0000318"/>
    <property type="project" value="GO_Central"/>
</dbReference>
<dbReference type="CDD" id="cd05471">
    <property type="entry name" value="pepsin_like"/>
    <property type="match status" value="1"/>
</dbReference>
<dbReference type="FunFam" id="2.40.70.10:FF:000058">
    <property type="entry name" value="ASpartyl Protease"/>
    <property type="match status" value="1"/>
</dbReference>
<dbReference type="Gene3D" id="2.40.70.10">
    <property type="entry name" value="Acid Proteases"/>
    <property type="match status" value="2"/>
</dbReference>
<dbReference type="InterPro" id="IPR001461">
    <property type="entry name" value="Aspartic_peptidase_A1"/>
</dbReference>
<dbReference type="InterPro" id="IPR034164">
    <property type="entry name" value="Pepsin-like_dom"/>
</dbReference>
<dbReference type="InterPro" id="IPR033121">
    <property type="entry name" value="PEPTIDASE_A1"/>
</dbReference>
<dbReference type="InterPro" id="IPR021109">
    <property type="entry name" value="Peptidase_aspartic_dom_sf"/>
</dbReference>
<dbReference type="PANTHER" id="PTHR47966:SF5">
    <property type="entry name" value="ASPARTIC PROTEASE 10"/>
    <property type="match status" value="1"/>
</dbReference>
<dbReference type="PANTHER" id="PTHR47966">
    <property type="entry name" value="BETA-SITE APP-CLEAVING ENZYME, ISOFORM A-RELATED"/>
    <property type="match status" value="1"/>
</dbReference>
<dbReference type="Pfam" id="PF00026">
    <property type="entry name" value="Asp"/>
    <property type="match status" value="1"/>
</dbReference>
<dbReference type="PRINTS" id="PR00792">
    <property type="entry name" value="PEPSIN"/>
</dbReference>
<dbReference type="SUPFAM" id="SSF50630">
    <property type="entry name" value="Acid proteases"/>
    <property type="match status" value="1"/>
</dbReference>
<dbReference type="PROSITE" id="PS51767">
    <property type="entry name" value="PEPTIDASE_A1"/>
    <property type="match status" value="1"/>
</dbReference>
<organism evidence="9">
    <name type="scientific">Caenorhabditis elegans</name>
    <dbReference type="NCBI Taxonomy" id="6239"/>
    <lineage>
        <taxon>Eukaryota</taxon>
        <taxon>Metazoa</taxon>
        <taxon>Ecdysozoa</taxon>
        <taxon>Nematoda</taxon>
        <taxon>Chromadorea</taxon>
        <taxon>Rhabditida</taxon>
        <taxon>Rhabditina</taxon>
        <taxon>Rhabditomorpha</taxon>
        <taxon>Rhabditoidea</taxon>
        <taxon>Rhabditidae</taxon>
        <taxon>Peloderinae</taxon>
        <taxon>Caenorhabditis</taxon>
    </lineage>
</organism>
<keyword id="KW-0025">Alternative splicing</keyword>
<keyword id="KW-0064">Aspartyl protease</keyword>
<keyword id="KW-1015">Disulfide bond</keyword>
<keyword id="KW-0325">Glycoprotein</keyword>
<keyword id="KW-0378">Hydrolase</keyword>
<keyword id="KW-0645">Protease</keyword>
<keyword id="KW-1185">Reference proteome</keyword>
<keyword id="KW-0964">Secreted</keyword>
<keyword id="KW-0732">Signal</keyword>
<keyword id="KW-0865">Zymogen</keyword>
<evidence type="ECO:0000250" key="1">
    <source>
        <dbReference type="UniProtKB" id="Q9N9H4"/>
    </source>
</evidence>
<evidence type="ECO:0000255" key="2"/>
<evidence type="ECO:0000255" key="3">
    <source>
        <dbReference type="PROSITE-ProRule" id="PRU00498"/>
    </source>
</evidence>
<evidence type="ECO:0000255" key="4">
    <source>
        <dbReference type="PROSITE-ProRule" id="PRU01103"/>
    </source>
</evidence>
<evidence type="ECO:0000269" key="5">
    <source>
    </source>
</evidence>
<evidence type="ECO:0000303" key="6">
    <source>
    </source>
</evidence>
<evidence type="ECO:0000305" key="7"/>
<evidence type="ECO:0000305" key="8">
    <source>
    </source>
</evidence>
<evidence type="ECO:0000312" key="9">
    <source>
        <dbReference type="Proteomes" id="UP000001940"/>
    </source>
</evidence>
<evidence type="ECO:0000312" key="10">
    <source>
        <dbReference type="WormBase" id="C15C8.3a"/>
    </source>
</evidence>
<evidence type="ECO:0000312" key="11">
    <source>
        <dbReference type="WormBase" id="C15C8.3b"/>
    </source>
</evidence>
<feature type="signal peptide" evidence="2">
    <location>
        <begin position="1"/>
        <end position="16"/>
    </location>
</feature>
<feature type="propeptide" id="PRO_0000449290" evidence="8">
    <location>
        <begin position="17"/>
        <end status="unknown"/>
    </location>
</feature>
<feature type="chain" id="PRO_5004186738" description="Aspartic protease 10">
    <location>
        <begin status="unknown"/>
        <end position="428"/>
    </location>
</feature>
<feature type="domain" description="Peptidase A1" evidence="4">
    <location>
        <begin position="72"/>
        <end position="425"/>
    </location>
</feature>
<feature type="active site" evidence="4">
    <location>
        <position position="90"/>
    </location>
</feature>
<feature type="active site" evidence="4">
    <location>
        <position position="318"/>
    </location>
</feature>
<feature type="glycosylation site" description="N-linked (GlcNAc...) asparagine" evidence="3">
    <location>
        <position position="155"/>
    </location>
</feature>
<feature type="glycosylation site" description="N-linked (GlcNAc...) asparagine" evidence="3">
    <location>
        <position position="191"/>
    </location>
</feature>
<feature type="disulfide bond" evidence="4">
    <location>
        <begin position="353"/>
        <end position="385"/>
    </location>
</feature>
<feature type="splice variant" id="VSP_060542" description="In isoform b." evidence="7">
    <location>
        <begin position="1"/>
        <end position="239"/>
    </location>
</feature>
<reference evidence="9" key="1">
    <citation type="journal article" date="1998" name="Science">
        <title>Genome sequence of the nematode C. elegans: a platform for investigating biology.</title>
        <authorList>
            <consortium name="The C. elegans sequencing consortium"/>
        </authorList>
    </citation>
    <scope>NUCLEOTIDE SEQUENCE [LARGE SCALE GENOMIC DNA]</scope>
    <source>
        <strain evidence="9">Bristol N2</strain>
    </source>
</reference>
<reference evidence="7" key="2">
    <citation type="journal article" date="2017" name="Nat. Cell Biol.">
        <title>Inter-organ signalling by HRG-7 promotes systemic haem homeostasis.</title>
        <authorList>
            <person name="Sinclair J."/>
            <person name="Pinter K."/>
            <person name="Samuel T."/>
            <person name="Beardsley S."/>
            <person name="Yuan X."/>
            <person name="Zhang J."/>
            <person name="Meng K."/>
            <person name="Yun S."/>
            <person name="Krause M."/>
            <person name="Hamza I."/>
        </authorList>
    </citation>
    <scope>FUNCTION</scope>
    <scope>SUBCELLULAR LOCATION</scope>
    <scope>TISSUE SPECIFICITY</scope>
    <scope>INDUCTION</scope>
    <scope>PROTEOLYTIC CLEAVAGE</scope>
    <scope>DISRUPTION PHENOTYPE</scope>
</reference>
<name>HRG7_CAEEL</name>
<sequence>MKTFIALLALLTVVSAEVHQFNIGYRPNMRQRMNAKGKLAEYEKERNELLSKKSLQLASSSSPVIDYEDMAYMVQISLGSPAQNFVLFIDSGSSNLWVPDITCAGGKDATCGSYCKSTPYDACLTFCQEECCTKTVEGVKVLSTTDACQSKHRFNSSLSSSYVTNGQKFDMTYNTGEVKGFFGVDTFCFTNTSVCATGQVFGQATTIGEAFAKQPEDGIIGLGWPALAVNQQTPPLFNLMNQGKLDQPYFVVYLANIGPTSQINGGAFTVGGLDTTHCSSNVDWVPLSTQTFWQFKLGGVSSGSYSQAPNSGWQAAADTAASFIGAPKSVVTSLAKAVGATYVPLTGAFFMDCDAVVPDIVFTINGKTYNMPSTSFVVSAGPGPCMFAFYELTAGGFYPAWMLGPPFMRAYCHVHDMKSGRLGLAKVL</sequence>
<protein>
    <recommendedName>
        <fullName>Aspartic protease 10</fullName>
        <ecNumber evidence="1">3.4.23.-</ecNumber>
    </recommendedName>
    <alternativeName>
        <fullName evidence="7">Heme transporter hrg-7</fullName>
    </alternativeName>
    <alternativeName>
        <fullName evidence="10">Heme-responsive gene 7 protein</fullName>
    </alternativeName>
</protein>
<accession>Q18020</accession>
<accession>E0AHB8</accession>
<comment type="function">
    <text evidence="5">Aspartic protease which plays a role in heme homeostasis and mediates inter-organ signaling between the intestine and extra-intestinal tissues when cellular heme levels are low.</text>
</comment>
<comment type="subcellular location">
    <subcellularLocation>
        <location evidence="5">Secreted</location>
    </subcellularLocation>
</comment>
<comment type="alternative products">
    <event type="alternative splicing"/>
    <isoform>
        <id>Q18020-1</id>
        <name evidence="10">a</name>
        <sequence type="displayed"/>
    </isoform>
    <isoform>
        <id>Q18020-2</id>
        <name evidence="11">b</name>
        <sequence type="described" ref="VSP_060542"/>
    </isoform>
</comment>
<comment type="tissue specificity">
    <text evidence="5">Synthesized in the intestine (PubMed:28581477). When secreted in low heme conditions, localizes to neurons near the anterior and posterior regions of the body and in coelomocytes (PubMed:28581477).</text>
</comment>
<comment type="induction">
    <text evidence="5">By heme deficiency.</text>
</comment>
<comment type="PTM">
    <text evidence="8">Proteolytically cleaved.</text>
</comment>
<comment type="disruption phenotype">
    <text evidence="5">RNAi-mediated knockdown in larvae results in defective heme accumulation in the intestine under low heme conditions (PubMed:28581477). Double RNAi-mediated knockdown with hrg-4 or mrp-5 in larvae results in defective heme sensing (PubMed:28581477).</text>
</comment>
<comment type="similarity">
    <text evidence="4">Belongs to the peptidase A1 family.</text>
</comment>
<gene>
    <name evidence="6 10" type="primary">hrg-7</name>
    <name evidence="10" type="synonym">asp-10</name>
    <name evidence="10" type="ORF">C15C8.3</name>
</gene>